<keyword id="KW-0067">ATP-binding</keyword>
<keyword id="KW-0143">Chaperone</keyword>
<keyword id="KW-0479">Metal-binding</keyword>
<keyword id="KW-0547">Nucleotide-binding</keyword>
<keyword id="KW-1185">Reference proteome</keyword>
<keyword id="KW-0862">Zinc</keyword>
<comment type="function">
    <text evidence="1">ATP-dependent specificity component of the Clp protease. It directs the protease to specific substrates. Can perform chaperone functions in the absence of ClpP.</text>
</comment>
<comment type="subunit">
    <text evidence="1">Component of the ClpX-ClpP complex. Forms a hexameric ring that, in the presence of ATP, binds to fourteen ClpP subunits assembled into a disk-like structure with a central cavity, resembling the structure of eukaryotic proteasomes.</text>
</comment>
<comment type="similarity">
    <text evidence="1">Belongs to the ClpX chaperone family.</text>
</comment>
<proteinExistence type="inferred from homology"/>
<sequence>MFKFGDEKGQLKCSFCGKSQEQVRKLVAGPGVYICDECIELCNEIIEEELNDDVEFNLNNIPKPREIKKILDQYVVGQERAKKSLSVAVYNHYKRVNSDMKIDDVELQKSNILMVGPTGCGKTLLAQTLARILDVPFAITDATSLTEAGYVGEDVENILLKLIQAADYDIEKAERGIIYIDEIDKIARKSENPSITRDVSGEGVQQALLKILEGTVASVPPQGGRKHPHQEFIQIDTTNILFIAGGAFDGLDKIIKSRIDNKVMGFGADIKSKTEENVGETLKYILPEDLLRYGLIPEFIGRLPVIVTLNELVEEDLVKILTEPRNALVKQYKKFFEMDNVELEFTPEALTAIAQKALERNTGARGLRAVVEEAILDIMYDLPSEPGIAKCVITPEVIKNHKNPELIRVKDKEETA</sequence>
<dbReference type="EMBL" id="CP001098">
    <property type="protein sequence ID" value="ACL70242.1"/>
    <property type="molecule type" value="Genomic_DNA"/>
</dbReference>
<dbReference type="RefSeq" id="WP_012636425.1">
    <property type="nucleotide sequence ID" value="NC_011899.1"/>
</dbReference>
<dbReference type="SMR" id="B8CY73"/>
<dbReference type="STRING" id="373903.Hore_14930"/>
<dbReference type="KEGG" id="hor:Hore_14930"/>
<dbReference type="eggNOG" id="COG1219">
    <property type="taxonomic scope" value="Bacteria"/>
</dbReference>
<dbReference type="HOGENOM" id="CLU_014218_8_2_9"/>
<dbReference type="OrthoDB" id="9804062at2"/>
<dbReference type="Proteomes" id="UP000000719">
    <property type="component" value="Chromosome"/>
</dbReference>
<dbReference type="GO" id="GO:0009376">
    <property type="term" value="C:HslUV protease complex"/>
    <property type="evidence" value="ECO:0007669"/>
    <property type="project" value="TreeGrafter"/>
</dbReference>
<dbReference type="GO" id="GO:0005524">
    <property type="term" value="F:ATP binding"/>
    <property type="evidence" value="ECO:0007669"/>
    <property type="project" value="UniProtKB-UniRule"/>
</dbReference>
<dbReference type="GO" id="GO:0016887">
    <property type="term" value="F:ATP hydrolysis activity"/>
    <property type="evidence" value="ECO:0007669"/>
    <property type="project" value="InterPro"/>
</dbReference>
<dbReference type="GO" id="GO:0140662">
    <property type="term" value="F:ATP-dependent protein folding chaperone"/>
    <property type="evidence" value="ECO:0007669"/>
    <property type="project" value="InterPro"/>
</dbReference>
<dbReference type="GO" id="GO:0046983">
    <property type="term" value="F:protein dimerization activity"/>
    <property type="evidence" value="ECO:0007669"/>
    <property type="project" value="InterPro"/>
</dbReference>
<dbReference type="GO" id="GO:0051082">
    <property type="term" value="F:unfolded protein binding"/>
    <property type="evidence" value="ECO:0007669"/>
    <property type="project" value="UniProtKB-UniRule"/>
</dbReference>
<dbReference type="GO" id="GO:0008270">
    <property type="term" value="F:zinc ion binding"/>
    <property type="evidence" value="ECO:0007669"/>
    <property type="project" value="InterPro"/>
</dbReference>
<dbReference type="GO" id="GO:0051301">
    <property type="term" value="P:cell division"/>
    <property type="evidence" value="ECO:0007669"/>
    <property type="project" value="TreeGrafter"/>
</dbReference>
<dbReference type="GO" id="GO:0051603">
    <property type="term" value="P:proteolysis involved in protein catabolic process"/>
    <property type="evidence" value="ECO:0007669"/>
    <property type="project" value="TreeGrafter"/>
</dbReference>
<dbReference type="CDD" id="cd19497">
    <property type="entry name" value="RecA-like_ClpX"/>
    <property type="match status" value="1"/>
</dbReference>
<dbReference type="FunFam" id="1.10.8.60:FF:000002">
    <property type="entry name" value="ATP-dependent Clp protease ATP-binding subunit ClpX"/>
    <property type="match status" value="1"/>
</dbReference>
<dbReference type="FunFam" id="3.40.50.300:FF:000005">
    <property type="entry name" value="ATP-dependent Clp protease ATP-binding subunit ClpX"/>
    <property type="match status" value="1"/>
</dbReference>
<dbReference type="Gene3D" id="1.10.8.60">
    <property type="match status" value="1"/>
</dbReference>
<dbReference type="Gene3D" id="6.20.220.10">
    <property type="entry name" value="ClpX chaperone, C4-type zinc finger domain"/>
    <property type="match status" value="1"/>
</dbReference>
<dbReference type="Gene3D" id="3.40.50.300">
    <property type="entry name" value="P-loop containing nucleotide triphosphate hydrolases"/>
    <property type="match status" value="1"/>
</dbReference>
<dbReference type="HAMAP" id="MF_00175">
    <property type="entry name" value="ClpX"/>
    <property type="match status" value="1"/>
</dbReference>
<dbReference type="InterPro" id="IPR003593">
    <property type="entry name" value="AAA+_ATPase"/>
</dbReference>
<dbReference type="InterPro" id="IPR050052">
    <property type="entry name" value="ATP-dep_Clp_protease_ClpX"/>
</dbReference>
<dbReference type="InterPro" id="IPR003959">
    <property type="entry name" value="ATPase_AAA_core"/>
</dbReference>
<dbReference type="InterPro" id="IPR019489">
    <property type="entry name" value="Clp_ATPase_C"/>
</dbReference>
<dbReference type="InterPro" id="IPR004487">
    <property type="entry name" value="Clp_protease_ATP-bd_su_ClpX"/>
</dbReference>
<dbReference type="InterPro" id="IPR046425">
    <property type="entry name" value="ClpX_bact"/>
</dbReference>
<dbReference type="InterPro" id="IPR027417">
    <property type="entry name" value="P-loop_NTPase"/>
</dbReference>
<dbReference type="InterPro" id="IPR010603">
    <property type="entry name" value="Znf_CppX_C4"/>
</dbReference>
<dbReference type="InterPro" id="IPR038366">
    <property type="entry name" value="Znf_CppX_C4_sf"/>
</dbReference>
<dbReference type="NCBIfam" id="TIGR00382">
    <property type="entry name" value="clpX"/>
    <property type="match status" value="1"/>
</dbReference>
<dbReference type="NCBIfam" id="NF003745">
    <property type="entry name" value="PRK05342.1"/>
    <property type="match status" value="1"/>
</dbReference>
<dbReference type="PANTHER" id="PTHR48102:SF7">
    <property type="entry name" value="ATP-DEPENDENT CLP PROTEASE ATP-BINDING SUBUNIT CLPX-LIKE, MITOCHONDRIAL"/>
    <property type="match status" value="1"/>
</dbReference>
<dbReference type="PANTHER" id="PTHR48102">
    <property type="entry name" value="ATP-DEPENDENT CLP PROTEASE ATP-BINDING SUBUNIT CLPX-LIKE, MITOCHONDRIAL-RELATED"/>
    <property type="match status" value="1"/>
</dbReference>
<dbReference type="Pfam" id="PF07724">
    <property type="entry name" value="AAA_2"/>
    <property type="match status" value="1"/>
</dbReference>
<dbReference type="Pfam" id="PF10431">
    <property type="entry name" value="ClpB_D2-small"/>
    <property type="match status" value="1"/>
</dbReference>
<dbReference type="Pfam" id="PF06689">
    <property type="entry name" value="zf-C4_ClpX"/>
    <property type="match status" value="1"/>
</dbReference>
<dbReference type="SMART" id="SM00382">
    <property type="entry name" value="AAA"/>
    <property type="match status" value="1"/>
</dbReference>
<dbReference type="SMART" id="SM01086">
    <property type="entry name" value="ClpB_D2-small"/>
    <property type="match status" value="1"/>
</dbReference>
<dbReference type="SMART" id="SM00994">
    <property type="entry name" value="zf-C4_ClpX"/>
    <property type="match status" value="1"/>
</dbReference>
<dbReference type="SUPFAM" id="SSF57716">
    <property type="entry name" value="Glucocorticoid receptor-like (DNA-binding domain)"/>
    <property type="match status" value="1"/>
</dbReference>
<dbReference type="SUPFAM" id="SSF52540">
    <property type="entry name" value="P-loop containing nucleoside triphosphate hydrolases"/>
    <property type="match status" value="1"/>
</dbReference>
<dbReference type="PROSITE" id="PS51902">
    <property type="entry name" value="CLPX_ZB"/>
    <property type="match status" value="1"/>
</dbReference>
<accession>B8CY73</accession>
<evidence type="ECO:0000255" key="1">
    <source>
        <dbReference type="HAMAP-Rule" id="MF_00175"/>
    </source>
</evidence>
<evidence type="ECO:0000255" key="2">
    <source>
        <dbReference type="PROSITE-ProRule" id="PRU01250"/>
    </source>
</evidence>
<organism>
    <name type="scientific">Halothermothrix orenii (strain H 168 / OCM 544 / DSM 9562)</name>
    <dbReference type="NCBI Taxonomy" id="373903"/>
    <lineage>
        <taxon>Bacteria</taxon>
        <taxon>Bacillati</taxon>
        <taxon>Bacillota</taxon>
        <taxon>Clostridia</taxon>
        <taxon>Halanaerobiales</taxon>
        <taxon>Halothermotrichaceae</taxon>
        <taxon>Halothermothrix</taxon>
    </lineage>
</organism>
<protein>
    <recommendedName>
        <fullName evidence="1">ATP-dependent Clp protease ATP-binding subunit ClpX</fullName>
    </recommendedName>
</protein>
<feature type="chain" id="PRO_1000123837" description="ATP-dependent Clp protease ATP-binding subunit ClpX">
    <location>
        <begin position="1"/>
        <end position="416"/>
    </location>
</feature>
<feature type="domain" description="ClpX-type ZB" evidence="2">
    <location>
        <begin position="1"/>
        <end position="54"/>
    </location>
</feature>
<feature type="binding site" evidence="2">
    <location>
        <position position="13"/>
    </location>
    <ligand>
        <name>Zn(2+)</name>
        <dbReference type="ChEBI" id="CHEBI:29105"/>
    </ligand>
</feature>
<feature type="binding site" evidence="2">
    <location>
        <position position="16"/>
    </location>
    <ligand>
        <name>Zn(2+)</name>
        <dbReference type="ChEBI" id="CHEBI:29105"/>
    </ligand>
</feature>
<feature type="binding site" evidence="2">
    <location>
        <position position="35"/>
    </location>
    <ligand>
        <name>Zn(2+)</name>
        <dbReference type="ChEBI" id="CHEBI:29105"/>
    </ligand>
</feature>
<feature type="binding site" evidence="2">
    <location>
        <position position="38"/>
    </location>
    <ligand>
        <name>Zn(2+)</name>
        <dbReference type="ChEBI" id="CHEBI:29105"/>
    </ligand>
</feature>
<feature type="binding site" evidence="1">
    <location>
        <begin position="117"/>
        <end position="124"/>
    </location>
    <ligand>
        <name>ATP</name>
        <dbReference type="ChEBI" id="CHEBI:30616"/>
    </ligand>
</feature>
<gene>
    <name evidence="1" type="primary">clpX</name>
    <name type="ordered locus">Hore_14930</name>
</gene>
<reference key="1">
    <citation type="journal article" date="2009" name="PLoS ONE">
        <title>Genome analysis of the anaerobic thermohalophilic bacterium Halothermothrix orenii.</title>
        <authorList>
            <person name="Mavromatis K."/>
            <person name="Ivanova N."/>
            <person name="Anderson I."/>
            <person name="Lykidis A."/>
            <person name="Hooper S.D."/>
            <person name="Sun H."/>
            <person name="Kunin V."/>
            <person name="Lapidus A."/>
            <person name="Hugenholtz P."/>
            <person name="Patel B."/>
            <person name="Kyrpides N.C."/>
        </authorList>
    </citation>
    <scope>NUCLEOTIDE SEQUENCE [LARGE SCALE GENOMIC DNA]</scope>
    <source>
        <strain>H 168 / OCM 544 / DSM 9562</strain>
    </source>
</reference>
<name>CLPX_HALOH</name>